<feature type="chain" id="PRO_0000069705" description="Lysophosphatidic acid receptor 1-B">
    <location>
        <begin position="1"/>
        <end position="366"/>
    </location>
</feature>
<feature type="topological domain" description="Extracellular" evidence="2">
    <location>
        <begin position="1"/>
        <end position="52"/>
    </location>
</feature>
<feature type="transmembrane region" description="Helical; Name=1" evidence="2">
    <location>
        <begin position="53"/>
        <end position="77"/>
    </location>
</feature>
<feature type="topological domain" description="Cytoplasmic" evidence="2">
    <location>
        <begin position="78"/>
        <end position="85"/>
    </location>
</feature>
<feature type="transmembrane region" description="Helical; Name=2" evidence="2">
    <location>
        <begin position="86"/>
        <end position="109"/>
    </location>
</feature>
<feature type="topological domain" description="Extracellular" evidence="2">
    <location>
        <begin position="110"/>
        <end position="123"/>
    </location>
</feature>
<feature type="transmembrane region" description="Helical; Name=3" evidence="2">
    <location>
        <begin position="124"/>
        <end position="146"/>
    </location>
</feature>
<feature type="topological domain" description="Cytoplasmic" evidence="2">
    <location>
        <begin position="147"/>
        <end position="165"/>
    </location>
</feature>
<feature type="transmembrane region" description="Helical; Name=4" evidence="2">
    <location>
        <begin position="166"/>
        <end position="186"/>
    </location>
</feature>
<feature type="topological domain" description="Extracellular" evidence="2">
    <location>
        <begin position="187"/>
        <end position="206"/>
    </location>
</feature>
<feature type="transmembrane region" description="Helical; Name=5" evidence="2">
    <location>
        <begin position="207"/>
        <end position="227"/>
    </location>
</feature>
<feature type="topological domain" description="Cytoplasmic" evidence="2">
    <location>
        <begin position="228"/>
        <end position="257"/>
    </location>
</feature>
<feature type="transmembrane region" description="Helical; Name=6" evidence="2">
    <location>
        <begin position="258"/>
        <end position="282"/>
    </location>
</feature>
<feature type="topological domain" description="Extracellular" evidence="2">
    <location>
        <begin position="283"/>
        <end position="296"/>
    </location>
</feature>
<feature type="transmembrane region" description="Helical; Name=7" evidence="2">
    <location>
        <begin position="297"/>
        <end position="317"/>
    </location>
</feature>
<feature type="topological domain" description="Cytoplasmic" evidence="2">
    <location>
        <begin position="318"/>
        <end position="366"/>
    </location>
</feature>
<feature type="binding site" evidence="2">
    <location>
        <position position="41"/>
    </location>
    <ligand>
        <name>a 1-acyl-sn-glycero-3-phosphate</name>
        <dbReference type="ChEBI" id="CHEBI:57970"/>
    </ligand>
</feature>
<feature type="binding site" evidence="2">
    <location>
        <begin position="126"/>
        <end position="131"/>
    </location>
    <ligand>
        <name>a 1-acyl-sn-glycero-3-phosphate</name>
        <dbReference type="ChEBI" id="CHEBI:57970"/>
    </ligand>
</feature>
<feature type="binding site" evidence="2">
    <location>
        <position position="212"/>
    </location>
    <ligand>
        <name>a 1-acyl-sn-glycero-3-phosphate</name>
        <dbReference type="ChEBI" id="CHEBI:57970"/>
    </ligand>
</feature>
<feature type="glycosylation site" description="N-linked (GlcNAc...) asparagine" evidence="3">
    <location>
        <position position="29"/>
    </location>
</feature>
<feature type="glycosylation site" description="N-linked (GlcNAc...) asparagine" evidence="3">
    <location>
        <position position="37"/>
    </location>
</feature>
<feature type="disulfide bond" evidence="2">
    <location>
        <begin position="26"/>
        <end position="192"/>
    </location>
</feature>
<feature type="disulfide bond" evidence="2">
    <location>
        <begin position="190"/>
        <end position="197"/>
    </location>
</feature>
<feature type="disulfide bond" evidence="2">
    <location>
        <begin position="286"/>
        <end position="289"/>
    </location>
</feature>
<organism>
    <name type="scientific">Xenopus laevis</name>
    <name type="common">African clawed frog</name>
    <dbReference type="NCBI Taxonomy" id="8355"/>
    <lineage>
        <taxon>Eukaryota</taxon>
        <taxon>Metazoa</taxon>
        <taxon>Chordata</taxon>
        <taxon>Craniata</taxon>
        <taxon>Vertebrata</taxon>
        <taxon>Euteleostomi</taxon>
        <taxon>Amphibia</taxon>
        <taxon>Batrachia</taxon>
        <taxon>Anura</taxon>
        <taxon>Pipoidea</taxon>
        <taxon>Pipidae</taxon>
        <taxon>Xenopodinae</taxon>
        <taxon>Xenopus</taxon>
        <taxon>Xenopus</taxon>
    </lineage>
</organism>
<keyword id="KW-1003">Cell membrane</keyword>
<keyword id="KW-1015">Disulfide bond</keyword>
<keyword id="KW-0967">Endosome</keyword>
<keyword id="KW-0297">G-protein coupled receptor</keyword>
<keyword id="KW-0325">Glycoprotein</keyword>
<keyword id="KW-0472">Membrane</keyword>
<keyword id="KW-0675">Receptor</keyword>
<keyword id="KW-1185">Reference proteome</keyword>
<keyword id="KW-0807">Transducer</keyword>
<keyword id="KW-0812">Transmembrane</keyword>
<keyword id="KW-1133">Transmembrane helix</keyword>
<gene>
    <name type="primary">lpar1-b</name>
    <name type="synonym">lpa1r</name>
    <name type="synonym">lpa1r2</name>
</gene>
<proteinExistence type="evidence at transcript level"/>
<accession>Q9PU16</accession>
<reference key="1">
    <citation type="journal article" date="2001" name="J. Biol. Chem.">
        <title>Two novel Xenopus homologs of mammalian LPA1/EDG-2 function as lysophosphatidic acid receptors in Xenopus oocytes and mammalian cells.</title>
        <authorList>
            <person name="Kimura Y."/>
            <person name="Schmitt A."/>
            <person name="Fukushima N."/>
            <person name="Ishii I."/>
            <person name="Kimura H."/>
            <person name="Nebreda A.R."/>
            <person name="Chun J."/>
        </authorList>
    </citation>
    <scope>NUCLEOTIDE SEQUENCE [MRNA]</scope>
    <scope>FUNCTION</scope>
</reference>
<sequence>MTSLSEFVSEPIGMMSQTSAASESQCYYNETIAFFYNRSGKYLDTEWNAVSKLVMGLGITVCIFIMLANLLVMVAIYVNRRFHFPIYYLMANLAAADFFAGLAYFYLMFNTGPNTRRLTVSTWLLRQGLIDTSLTASVANLLAIAIERHITVFRMQLHTRMSNRRVVVVIVVIWTVAIVMGAIPSVGWNCICDLEHCSNMAPLYSDSYLIFWTIFNLVTFVVMVVLYAHIFVYVRQRTMRMSRHSSGPRRNRDTMMSLLKTVVIVLGAFIVCWTPGLVLLLLDVCCPQCNILAYEKFFLLLAEFNSAMNPIIYSYRDKEMSATFKQILCCQRTENVNGPTEGSDRSASSLNHTILAGVHSNDHSVV</sequence>
<dbReference type="EMBL" id="AJ249844">
    <property type="protein sequence ID" value="CAB62283.1"/>
    <property type="molecule type" value="mRNA"/>
</dbReference>
<dbReference type="SMR" id="Q9PU16"/>
<dbReference type="GlyCosmos" id="Q9PU16">
    <property type="glycosylation" value="2 sites, No reported glycans"/>
</dbReference>
<dbReference type="GeneID" id="373591"/>
<dbReference type="KEGG" id="xla:373591"/>
<dbReference type="AGR" id="Xenbase:XB-GENE-958420"/>
<dbReference type="CTD" id="373591"/>
<dbReference type="Xenbase" id="XB-GENE-958420">
    <property type="gene designation" value="lpar1.L"/>
</dbReference>
<dbReference type="OMA" id="CQRQENI"/>
<dbReference type="OrthoDB" id="5987098at2759"/>
<dbReference type="Proteomes" id="UP000186698">
    <property type="component" value="Chromosome 1L"/>
</dbReference>
<dbReference type="Bgee" id="373591">
    <property type="expression patterns" value="Expressed in neurula embryo and 19 other cell types or tissues"/>
</dbReference>
<dbReference type="GO" id="GO:0009986">
    <property type="term" value="C:cell surface"/>
    <property type="evidence" value="ECO:0007669"/>
    <property type="project" value="UniProtKB-SubCell"/>
</dbReference>
<dbReference type="GO" id="GO:0005737">
    <property type="term" value="C:cytoplasm"/>
    <property type="evidence" value="ECO:0000318"/>
    <property type="project" value="GO_Central"/>
</dbReference>
<dbReference type="GO" id="GO:0005768">
    <property type="term" value="C:endosome"/>
    <property type="evidence" value="ECO:0007669"/>
    <property type="project" value="UniProtKB-SubCell"/>
</dbReference>
<dbReference type="GO" id="GO:0005886">
    <property type="term" value="C:plasma membrane"/>
    <property type="evidence" value="ECO:0000250"/>
    <property type="project" value="UniProtKB"/>
</dbReference>
<dbReference type="GO" id="GO:0070915">
    <property type="term" value="F:lysophosphatidic acid receptor activity"/>
    <property type="evidence" value="ECO:0000250"/>
    <property type="project" value="UniProtKB"/>
</dbReference>
<dbReference type="GO" id="GO:0007189">
    <property type="term" value="P:adenylate cyclase-activating G protein-coupled receptor signaling pathway"/>
    <property type="evidence" value="ECO:0000318"/>
    <property type="project" value="GO_Central"/>
</dbReference>
<dbReference type="GO" id="GO:0007193">
    <property type="term" value="P:adenylate cyclase-inhibiting G protein-coupled receptor signaling pathway"/>
    <property type="evidence" value="ECO:0000250"/>
    <property type="project" value="UniProtKB"/>
</dbReference>
<dbReference type="GO" id="GO:0010977">
    <property type="term" value="P:negative regulation of neuron projection development"/>
    <property type="evidence" value="ECO:0000250"/>
    <property type="project" value="UniProtKB"/>
</dbReference>
<dbReference type="GO" id="GO:0022008">
    <property type="term" value="P:neurogenesis"/>
    <property type="evidence" value="ECO:0000318"/>
    <property type="project" value="GO_Central"/>
</dbReference>
<dbReference type="GO" id="GO:0043410">
    <property type="term" value="P:positive regulation of MAPK cascade"/>
    <property type="evidence" value="ECO:0000250"/>
    <property type="project" value="UniProtKB"/>
</dbReference>
<dbReference type="GO" id="GO:0035025">
    <property type="term" value="P:positive regulation of Rho protein signal transduction"/>
    <property type="evidence" value="ECO:0000250"/>
    <property type="project" value="UniProtKB"/>
</dbReference>
<dbReference type="GO" id="GO:0051496">
    <property type="term" value="P:positive regulation of stress fiber assembly"/>
    <property type="evidence" value="ECO:0000250"/>
    <property type="project" value="UniProtKB"/>
</dbReference>
<dbReference type="GO" id="GO:0008360">
    <property type="term" value="P:regulation of cell shape"/>
    <property type="evidence" value="ECO:0000250"/>
    <property type="project" value="UniProtKB"/>
</dbReference>
<dbReference type="GO" id="GO:0019222">
    <property type="term" value="P:regulation of metabolic process"/>
    <property type="evidence" value="ECO:0000318"/>
    <property type="project" value="GO_Central"/>
</dbReference>
<dbReference type="CDD" id="cd15344">
    <property type="entry name" value="7tmA_LPAR1_Edg2"/>
    <property type="match status" value="1"/>
</dbReference>
<dbReference type="FunFam" id="1.20.1070.10:FF:000025">
    <property type="entry name" value="Lysophosphatidic acid receptor 1"/>
    <property type="match status" value="1"/>
</dbReference>
<dbReference type="Gene3D" id="1.20.1070.10">
    <property type="entry name" value="Rhodopsin 7-helix transmembrane proteins"/>
    <property type="match status" value="1"/>
</dbReference>
<dbReference type="InterPro" id="IPR000276">
    <property type="entry name" value="GPCR_Rhodpsn"/>
</dbReference>
<dbReference type="InterPro" id="IPR017452">
    <property type="entry name" value="GPCR_Rhodpsn_7TM"/>
</dbReference>
<dbReference type="InterPro" id="IPR004065">
    <property type="entry name" value="LPA_rcpt"/>
</dbReference>
<dbReference type="InterPro" id="IPR002277">
    <property type="entry name" value="LPA_rcpt_EDG2"/>
</dbReference>
<dbReference type="PANTHER" id="PTHR22750">
    <property type="entry name" value="G-PROTEIN COUPLED RECEPTOR"/>
    <property type="match status" value="1"/>
</dbReference>
<dbReference type="Pfam" id="PF00001">
    <property type="entry name" value="7tm_1"/>
    <property type="match status" value="1"/>
</dbReference>
<dbReference type="PRINTS" id="PR01148">
    <property type="entry name" value="EDG2RECEPTOR"/>
</dbReference>
<dbReference type="PRINTS" id="PR00237">
    <property type="entry name" value="GPCRRHODOPSN"/>
</dbReference>
<dbReference type="PRINTS" id="PR01527">
    <property type="entry name" value="LPARECEPTOR"/>
</dbReference>
<dbReference type="SMART" id="SM01381">
    <property type="entry name" value="7TM_GPCR_Srsx"/>
    <property type="match status" value="1"/>
</dbReference>
<dbReference type="SUPFAM" id="SSF81321">
    <property type="entry name" value="Family A G protein-coupled receptor-like"/>
    <property type="match status" value="1"/>
</dbReference>
<dbReference type="PROSITE" id="PS00237">
    <property type="entry name" value="G_PROTEIN_RECEP_F1_1"/>
    <property type="match status" value="1"/>
</dbReference>
<dbReference type="PROSITE" id="PS50262">
    <property type="entry name" value="G_PROTEIN_RECEP_F1_2"/>
    <property type="match status" value="1"/>
</dbReference>
<protein>
    <recommendedName>
        <fullName>Lysophosphatidic acid receptor 1-B</fullName>
        <shortName>LPA receptor 1-B</shortName>
        <shortName>LPA-1-B</shortName>
    </recommendedName>
    <alternativeName>
        <fullName>Lysophosphatidic acid receptor LPA1 homolog 2</fullName>
        <shortName>xLPA1-2</shortName>
    </alternativeName>
</protein>
<comment type="function">
    <text evidence="1 5">Receptor for lysophosphatidic acid (LPA) (PubMed:11278944). Plays a role in the reorganization of the actin cytoskeleton, cell migration, differentiation and proliferation, and thereby contributes to the responses to tissue damage and infectious agents. Activates downstream signaling cascades via the G(i)/G(o), G(12)/G(13), and G(q) families of heteromeric G proteins. Signaling inhibits adenylyl cyclase activity and decreases cellular cAMP levels (PubMed:11278944). Signaling triggers an increase of cytoplasmic Ca(2+) levels. Signaling leads to the activation of phospholipase C (PLC) and the formation of inositol 1,4,5-trisphosphate. Signaling mediates activation of down-stream MAP kinases (By similarity). Contributes to the regulation of cell shape (PubMed:11278944). Promotes Rho-dependent reorganization of the actin cytoskeleton in neuronal cells and neurite retraction. Promotes the activation of Rho and the formation of actin stress fibers. Promotes formation of lamellipodia at the leading edge of migrating cells via activation of Rac. Through its function as lysophosphatidic acid receptor, plays a role in chemotaxis and cell migration, including responses to injury and wounding. Promotes cell proliferation in response to lysophosphatidic acid (By similarity).</text>
</comment>
<comment type="subcellular location">
    <subcellularLocation>
        <location evidence="1">Cell surface</location>
    </subcellularLocation>
    <subcellularLocation>
        <location evidence="1">Cell membrane</location>
        <topology evidence="2">Multi-pass membrane protein</topology>
    </subcellularLocation>
    <subcellularLocation>
        <location evidence="2">Endosome</location>
    </subcellularLocation>
    <text evidence="2">Prior to LPA treatment found predominantly at the cell surface. Internalized after LPA treatment.</text>
</comment>
<comment type="tissue specificity">
    <text>Expressed at high levels in oocytes and at lower levels in brain and spinal cord. Below detection level in lung, heart, kidney, liver, muscle, stomach, and intestine.</text>
</comment>
<comment type="similarity">
    <text evidence="4">Belongs to the G-protein coupled receptor 1 family.</text>
</comment>
<name>LPA12_XENLA</name>
<evidence type="ECO:0000250" key="1">
    <source>
        <dbReference type="UniProtKB" id="P61793"/>
    </source>
</evidence>
<evidence type="ECO:0000250" key="2">
    <source>
        <dbReference type="UniProtKB" id="Q92633"/>
    </source>
</evidence>
<evidence type="ECO:0000255" key="3"/>
<evidence type="ECO:0000255" key="4">
    <source>
        <dbReference type="PROSITE-ProRule" id="PRU00521"/>
    </source>
</evidence>
<evidence type="ECO:0000269" key="5">
    <source>
    </source>
</evidence>